<evidence type="ECO:0000255" key="1">
    <source>
        <dbReference type="HAMAP-Rule" id="MF_01211"/>
    </source>
</evidence>
<accession>A0AJT9</accession>
<dbReference type="EMBL" id="AM263198">
    <property type="protein sequence ID" value="CAK21271.1"/>
    <property type="molecule type" value="Genomic_DNA"/>
</dbReference>
<dbReference type="SMR" id="A0AJT9"/>
<dbReference type="STRING" id="386043.lwe1853"/>
<dbReference type="KEGG" id="lwe:lwe1853"/>
<dbReference type="eggNOG" id="COG0543">
    <property type="taxonomic scope" value="Bacteria"/>
</dbReference>
<dbReference type="HOGENOM" id="CLU_003827_1_2_9"/>
<dbReference type="OrthoDB" id="9778346at2"/>
<dbReference type="UniPathway" id="UPA00070">
    <property type="reaction ID" value="UER00945"/>
</dbReference>
<dbReference type="Proteomes" id="UP000000779">
    <property type="component" value="Chromosome"/>
</dbReference>
<dbReference type="GO" id="GO:0051537">
    <property type="term" value="F:2 iron, 2 sulfur cluster binding"/>
    <property type="evidence" value="ECO:0007669"/>
    <property type="project" value="UniProtKB-KW"/>
</dbReference>
<dbReference type="GO" id="GO:0009055">
    <property type="term" value="F:electron transfer activity"/>
    <property type="evidence" value="ECO:0007669"/>
    <property type="project" value="UniProtKB-UniRule"/>
</dbReference>
<dbReference type="GO" id="GO:0050660">
    <property type="term" value="F:flavin adenine dinucleotide binding"/>
    <property type="evidence" value="ECO:0007669"/>
    <property type="project" value="InterPro"/>
</dbReference>
<dbReference type="GO" id="GO:0046872">
    <property type="term" value="F:metal ion binding"/>
    <property type="evidence" value="ECO:0007669"/>
    <property type="project" value="UniProtKB-KW"/>
</dbReference>
<dbReference type="GO" id="GO:0016491">
    <property type="term" value="F:oxidoreductase activity"/>
    <property type="evidence" value="ECO:0007669"/>
    <property type="project" value="InterPro"/>
</dbReference>
<dbReference type="GO" id="GO:0044205">
    <property type="term" value="P:'de novo' UMP biosynthetic process"/>
    <property type="evidence" value="ECO:0007669"/>
    <property type="project" value="UniProtKB-UniRule"/>
</dbReference>
<dbReference type="CDD" id="cd06218">
    <property type="entry name" value="DHOD_e_trans"/>
    <property type="match status" value="1"/>
</dbReference>
<dbReference type="FunFam" id="2.10.240.10:FF:000001">
    <property type="entry name" value="Dihydroorotate dehydrogenase B (NAD(+)), electron transfer subunit"/>
    <property type="match status" value="1"/>
</dbReference>
<dbReference type="FunFam" id="3.40.50.80:FF:000017">
    <property type="entry name" value="Dihydroorotate dehydrogenase B (NAD(+)), electron transfer subunit"/>
    <property type="match status" value="1"/>
</dbReference>
<dbReference type="Gene3D" id="2.10.240.10">
    <property type="entry name" value="Dihydroorotate dehydrogenase, electron transfer subunit"/>
    <property type="match status" value="1"/>
</dbReference>
<dbReference type="Gene3D" id="3.40.50.80">
    <property type="entry name" value="Nucleotide-binding domain of ferredoxin-NADP reductase (FNR) module"/>
    <property type="match status" value="1"/>
</dbReference>
<dbReference type="Gene3D" id="2.40.30.10">
    <property type="entry name" value="Translation factors"/>
    <property type="match status" value="1"/>
</dbReference>
<dbReference type="HAMAP" id="MF_01211">
    <property type="entry name" value="DHODB_Fe_S_bind"/>
    <property type="match status" value="1"/>
</dbReference>
<dbReference type="InterPro" id="IPR012165">
    <property type="entry name" value="Cyt_c3_hydrogenase_gsu"/>
</dbReference>
<dbReference type="InterPro" id="IPR037117">
    <property type="entry name" value="Dihydroorotate_DH_ele_sf"/>
</dbReference>
<dbReference type="InterPro" id="IPR019480">
    <property type="entry name" value="Dihydroorotate_DH_Fe-S-bd"/>
</dbReference>
<dbReference type="InterPro" id="IPR023455">
    <property type="entry name" value="Dihydroorotate_DHASE_ETsu"/>
</dbReference>
<dbReference type="InterPro" id="IPR017927">
    <property type="entry name" value="FAD-bd_FR_type"/>
</dbReference>
<dbReference type="InterPro" id="IPR039261">
    <property type="entry name" value="FNR_nucleotide-bd"/>
</dbReference>
<dbReference type="InterPro" id="IPR001433">
    <property type="entry name" value="OxRdtase_FAD/NAD-bd"/>
</dbReference>
<dbReference type="InterPro" id="IPR050353">
    <property type="entry name" value="PyrK_electron_transfer"/>
</dbReference>
<dbReference type="InterPro" id="IPR017938">
    <property type="entry name" value="Riboflavin_synthase-like_b-brl"/>
</dbReference>
<dbReference type="NCBIfam" id="NF000797">
    <property type="entry name" value="PRK00054.1-2"/>
    <property type="match status" value="1"/>
</dbReference>
<dbReference type="NCBIfam" id="NF000799">
    <property type="entry name" value="PRK00054.1-4"/>
    <property type="match status" value="1"/>
</dbReference>
<dbReference type="PANTHER" id="PTHR43513">
    <property type="entry name" value="DIHYDROOROTATE DEHYDROGENASE B (NAD(+)), ELECTRON TRANSFER SUBUNIT"/>
    <property type="match status" value="1"/>
</dbReference>
<dbReference type="PANTHER" id="PTHR43513:SF3">
    <property type="entry name" value="DIHYDROOROTATE DEHYDROGENASE B (NAD(+)), ELECTRON TRANSFER SUBUNIT-RELATED"/>
    <property type="match status" value="1"/>
</dbReference>
<dbReference type="Pfam" id="PF10418">
    <property type="entry name" value="DHODB_Fe-S_bind"/>
    <property type="match status" value="1"/>
</dbReference>
<dbReference type="Pfam" id="PF00175">
    <property type="entry name" value="NAD_binding_1"/>
    <property type="match status" value="1"/>
</dbReference>
<dbReference type="PIRSF" id="PIRSF006816">
    <property type="entry name" value="Cyc3_hyd_g"/>
    <property type="match status" value="1"/>
</dbReference>
<dbReference type="PRINTS" id="PR00409">
    <property type="entry name" value="PHDIOXRDTASE"/>
</dbReference>
<dbReference type="SUPFAM" id="SSF52343">
    <property type="entry name" value="Ferredoxin reductase-like, C-terminal NADP-linked domain"/>
    <property type="match status" value="1"/>
</dbReference>
<dbReference type="SUPFAM" id="SSF63380">
    <property type="entry name" value="Riboflavin synthase domain-like"/>
    <property type="match status" value="1"/>
</dbReference>
<dbReference type="PROSITE" id="PS51384">
    <property type="entry name" value="FAD_FR"/>
    <property type="match status" value="1"/>
</dbReference>
<feature type="chain" id="PRO_1000066405" description="Dihydroorotate dehydrogenase B (NAD(+)), electron transfer subunit">
    <location>
        <begin position="1"/>
        <end position="254"/>
    </location>
</feature>
<feature type="domain" description="FAD-binding FR-type" evidence="1">
    <location>
        <begin position="1"/>
        <end position="99"/>
    </location>
</feature>
<feature type="binding site" evidence="1">
    <location>
        <begin position="50"/>
        <end position="53"/>
    </location>
    <ligand>
        <name>FAD</name>
        <dbReference type="ChEBI" id="CHEBI:57692"/>
    </ligand>
</feature>
<feature type="binding site" evidence="1">
    <location>
        <begin position="67"/>
        <end position="69"/>
    </location>
    <ligand>
        <name>FAD</name>
        <dbReference type="ChEBI" id="CHEBI:57692"/>
    </ligand>
</feature>
<feature type="binding site" evidence="1">
    <location>
        <begin position="74"/>
        <end position="75"/>
    </location>
    <ligand>
        <name>FAD</name>
        <dbReference type="ChEBI" id="CHEBI:57692"/>
    </ligand>
</feature>
<feature type="binding site" evidence="1">
    <location>
        <position position="218"/>
    </location>
    <ligand>
        <name>[2Fe-2S] cluster</name>
        <dbReference type="ChEBI" id="CHEBI:190135"/>
    </ligand>
</feature>
<feature type="binding site" evidence="1">
    <location>
        <position position="223"/>
    </location>
    <ligand>
        <name>[2Fe-2S] cluster</name>
        <dbReference type="ChEBI" id="CHEBI:190135"/>
    </ligand>
</feature>
<feature type="binding site" evidence="1">
    <location>
        <position position="226"/>
    </location>
    <ligand>
        <name>[2Fe-2S] cluster</name>
        <dbReference type="ChEBI" id="CHEBI:190135"/>
    </ligand>
</feature>
<feature type="binding site" evidence="1">
    <location>
        <position position="241"/>
    </location>
    <ligand>
        <name>[2Fe-2S] cluster</name>
        <dbReference type="ChEBI" id="CHEBI:190135"/>
    </ligand>
</feature>
<gene>
    <name evidence="1" type="primary">pyrK</name>
    <name type="ordered locus">lwe1853</name>
</gene>
<protein>
    <recommendedName>
        <fullName evidence="1">Dihydroorotate dehydrogenase B (NAD(+)), electron transfer subunit</fullName>
    </recommendedName>
    <alternativeName>
        <fullName evidence="1">Dihydroorotate oxidase B, electron transfer subunit</fullName>
    </alternativeName>
</protein>
<sequence length="254" mass="27842">MLQTEMKVIQQTEIADKVYELILSGECVMDMSPGQFLMLKPSRSDLLMRRPISICSYDKSAQTCILLYRVEGDGTEDFSKLSSDDTIDVLGPLGKGFDIDRTPEPKTALLIGGGIGVPPMYQLGKELAGKGVQVTFVNGFQSAKDSFYEKEMTKYGTVHIATVDGTLGTQGFVTDITKNFLEEPDVIYSCGPKAMLEAVKASFPETKTYLSLEERMACGIGACYACVCPKADDRNKQFKVCEDGPVFRADEVSL</sequence>
<keyword id="KW-0001">2Fe-2S</keyword>
<keyword id="KW-0249">Electron transport</keyword>
<keyword id="KW-0274">FAD</keyword>
<keyword id="KW-0285">Flavoprotein</keyword>
<keyword id="KW-0408">Iron</keyword>
<keyword id="KW-0411">Iron-sulfur</keyword>
<keyword id="KW-0479">Metal-binding</keyword>
<keyword id="KW-0665">Pyrimidine biosynthesis</keyword>
<keyword id="KW-0813">Transport</keyword>
<proteinExistence type="inferred from homology"/>
<name>PYRK_LISW6</name>
<comment type="function">
    <text evidence="1">Responsible for channeling the electrons from the oxidation of dihydroorotate from the FMN redox center in the PyrD type B subunit to the ultimate electron acceptor NAD(+).</text>
</comment>
<comment type="cofactor">
    <cofactor evidence="1">
        <name>[2Fe-2S] cluster</name>
        <dbReference type="ChEBI" id="CHEBI:190135"/>
    </cofactor>
    <text evidence="1">Binds 1 [2Fe-2S] cluster per subunit.</text>
</comment>
<comment type="cofactor">
    <cofactor evidence="1">
        <name>FAD</name>
        <dbReference type="ChEBI" id="CHEBI:57692"/>
    </cofactor>
    <text evidence="1">Binds 1 FAD per subunit.</text>
</comment>
<comment type="pathway">
    <text evidence="1">Pyrimidine metabolism; UMP biosynthesis via de novo pathway; orotate from (S)-dihydroorotate (NAD(+) route): step 1/1.</text>
</comment>
<comment type="subunit">
    <text evidence="1">Heterotetramer of 2 PyrK and 2 PyrD type B subunits.</text>
</comment>
<comment type="similarity">
    <text evidence="1">Belongs to the PyrK family.</text>
</comment>
<organism>
    <name type="scientific">Listeria welshimeri serovar 6b (strain ATCC 35897 / DSM 20650 / CCUG 15529 / CIP 8149 / NCTC 11857 / SLCC 5334 / V8)</name>
    <dbReference type="NCBI Taxonomy" id="386043"/>
    <lineage>
        <taxon>Bacteria</taxon>
        <taxon>Bacillati</taxon>
        <taxon>Bacillota</taxon>
        <taxon>Bacilli</taxon>
        <taxon>Bacillales</taxon>
        <taxon>Listeriaceae</taxon>
        <taxon>Listeria</taxon>
    </lineage>
</organism>
<reference key="1">
    <citation type="journal article" date="2006" name="J. Bacteriol.">
        <title>Whole-genome sequence of Listeria welshimeri reveals common steps in genome reduction with Listeria innocua as compared to Listeria monocytogenes.</title>
        <authorList>
            <person name="Hain T."/>
            <person name="Steinweg C."/>
            <person name="Kuenne C.T."/>
            <person name="Billion A."/>
            <person name="Ghai R."/>
            <person name="Chatterjee S.S."/>
            <person name="Domann E."/>
            <person name="Kaerst U."/>
            <person name="Goesmann A."/>
            <person name="Bekel T."/>
            <person name="Bartels D."/>
            <person name="Kaiser O."/>
            <person name="Meyer F."/>
            <person name="Puehler A."/>
            <person name="Weisshaar B."/>
            <person name="Wehland J."/>
            <person name="Liang C."/>
            <person name="Dandekar T."/>
            <person name="Lampidis R."/>
            <person name="Kreft J."/>
            <person name="Goebel W."/>
            <person name="Chakraborty T."/>
        </authorList>
    </citation>
    <scope>NUCLEOTIDE SEQUENCE [LARGE SCALE GENOMIC DNA]</scope>
    <source>
        <strain>ATCC 35897 / DSM 20650 / CCUG 15529 / CIP 8149 / NCTC 11857 / SLCC 5334 / V8</strain>
    </source>
</reference>